<sequence>MKKGNVRTLDGIIYSLFIFMTIVTLFIIYRDIPSNAVLNFVTAYAIFAILIPLYILVRVLFTVKHFTFEEVKKEGVKFLMFFIGIMMLNLVGDFLLPLPDLKLSKMLPSSLGFAFGITCFDIVLSKRTK</sequence>
<proteinExistence type="predicted"/>
<name>Y190_CLOPE</name>
<feature type="chain" id="PRO_0000208252" description="Uncharacterized protein CPE0190">
    <location>
        <begin position="1"/>
        <end position="129"/>
    </location>
</feature>
<organism>
    <name type="scientific">Clostridium perfringens (strain 13 / Type A)</name>
    <dbReference type="NCBI Taxonomy" id="195102"/>
    <lineage>
        <taxon>Bacteria</taxon>
        <taxon>Bacillati</taxon>
        <taxon>Bacillota</taxon>
        <taxon>Clostridia</taxon>
        <taxon>Eubacteriales</taxon>
        <taxon>Clostridiaceae</taxon>
        <taxon>Clostridium</taxon>
    </lineage>
</organism>
<evidence type="ECO:0000305" key="1"/>
<protein>
    <recommendedName>
        <fullName>Uncharacterized protein CPE0190</fullName>
    </recommendedName>
    <alternativeName>
        <fullName>ORFC</fullName>
    </alternativeName>
</protein>
<keyword id="KW-1185">Reference proteome</keyword>
<accession>P26834</accession>
<reference key="1">
    <citation type="journal article" date="1994" name="Mol. Gen. Genet.">
        <title>Molecular genetic analysis of the nagH gene encoding a hyaluronidase of Clostridium perfringens.</title>
        <authorList>
            <person name="Canard B."/>
            <person name="Garnier T."/>
            <person name="Saint-Joanis B."/>
            <person name="Cole S.T."/>
        </authorList>
    </citation>
    <scope>NUCLEOTIDE SEQUENCE [GENOMIC DNA]</scope>
    <source>
        <strain>CPN50</strain>
    </source>
</reference>
<reference key="2">
    <citation type="journal article" date="2002" name="Proc. Natl. Acad. Sci. U.S.A.">
        <title>Complete genome sequence of Clostridium perfringens, an anaerobic flesh-eater.</title>
        <authorList>
            <person name="Shimizu T."/>
            <person name="Ohtani K."/>
            <person name="Hirakawa H."/>
            <person name="Ohshima K."/>
            <person name="Yamashita A."/>
            <person name="Shiba T."/>
            <person name="Ogasawara N."/>
            <person name="Hattori M."/>
            <person name="Kuhara S."/>
            <person name="Hayashi H."/>
        </authorList>
    </citation>
    <scope>NUCLEOTIDE SEQUENCE [LARGE SCALE GENOMIC DNA]</scope>
    <source>
        <strain>13 / Type A</strain>
    </source>
</reference>
<gene>
    <name type="ordered locus">CPE0190</name>
</gene>
<dbReference type="EMBL" id="M81878">
    <property type="protein sequence ID" value="AAA23258.1"/>
    <property type="status" value="ALT_FRAME"/>
    <property type="molecule type" value="Genomic_DNA"/>
</dbReference>
<dbReference type="EMBL" id="BA000016">
    <property type="protein sequence ID" value="BAB79896.1"/>
    <property type="molecule type" value="Genomic_DNA"/>
</dbReference>
<dbReference type="PIR" id="S43903">
    <property type="entry name" value="S43903"/>
</dbReference>
<dbReference type="RefSeq" id="WP_003479965.1">
    <property type="nucleotide sequence ID" value="NC_003366.1"/>
</dbReference>
<dbReference type="STRING" id="195102.gene:10489434"/>
<dbReference type="KEGG" id="cpe:CPE0190"/>
<dbReference type="HOGENOM" id="CLU_151754_0_0_9"/>
<dbReference type="Proteomes" id="UP000000818">
    <property type="component" value="Chromosome"/>
</dbReference>
<comment type="sequence caution" evidence="1">
    <conflict type="frameshift">
        <sequence resource="EMBL-CDS" id="AAA23258"/>
    </conflict>
</comment>